<name>CDPKE_ARATH</name>
<keyword id="KW-0025">Alternative splicing</keyword>
<keyword id="KW-0067">ATP-binding</keyword>
<keyword id="KW-0106">Calcium</keyword>
<keyword id="KW-0418">Kinase</keyword>
<keyword id="KW-0449">Lipoprotein</keyword>
<keyword id="KW-0472">Membrane</keyword>
<keyword id="KW-0479">Metal-binding</keyword>
<keyword id="KW-0519">Myristate</keyword>
<keyword id="KW-0547">Nucleotide-binding</keyword>
<keyword id="KW-0597">Phosphoprotein</keyword>
<keyword id="KW-1185">Reference proteome</keyword>
<keyword id="KW-0677">Repeat</keyword>
<keyword id="KW-0723">Serine/threonine-protein kinase</keyword>
<keyword id="KW-0808">Transferase</keyword>
<comment type="function">
    <text>May play a role in signal transduction pathways that involve calcium as a second messenger.</text>
</comment>
<comment type="catalytic activity">
    <reaction>
        <text>L-seryl-[protein] + ATP = O-phospho-L-seryl-[protein] + ADP + H(+)</text>
        <dbReference type="Rhea" id="RHEA:17989"/>
        <dbReference type="Rhea" id="RHEA-COMP:9863"/>
        <dbReference type="Rhea" id="RHEA-COMP:11604"/>
        <dbReference type="ChEBI" id="CHEBI:15378"/>
        <dbReference type="ChEBI" id="CHEBI:29999"/>
        <dbReference type="ChEBI" id="CHEBI:30616"/>
        <dbReference type="ChEBI" id="CHEBI:83421"/>
        <dbReference type="ChEBI" id="CHEBI:456216"/>
        <dbReference type="EC" id="2.7.11.1"/>
    </reaction>
</comment>
<comment type="catalytic activity">
    <reaction>
        <text>L-threonyl-[protein] + ATP = O-phospho-L-threonyl-[protein] + ADP + H(+)</text>
        <dbReference type="Rhea" id="RHEA:46608"/>
        <dbReference type="Rhea" id="RHEA-COMP:11060"/>
        <dbReference type="Rhea" id="RHEA-COMP:11605"/>
        <dbReference type="ChEBI" id="CHEBI:15378"/>
        <dbReference type="ChEBI" id="CHEBI:30013"/>
        <dbReference type="ChEBI" id="CHEBI:30616"/>
        <dbReference type="ChEBI" id="CHEBI:61977"/>
        <dbReference type="ChEBI" id="CHEBI:456216"/>
        <dbReference type="EC" id="2.7.11.1"/>
    </reaction>
</comment>
<comment type="activity regulation">
    <text evidence="1">Activated by calcium. Autophosphorylation may play an important role in the regulation of the kinase activity (By similarity).</text>
</comment>
<comment type="subcellular location">
    <subcellularLocation>
        <location evidence="7">Membrane</location>
        <topology evidence="7">Lipid-anchor</topology>
    </subcellularLocation>
</comment>
<comment type="alternative products">
    <event type="alternative splicing"/>
    <isoform>
        <id>P93759-1</id>
        <name>1</name>
        <sequence type="displayed"/>
    </isoform>
    <text>A number of isoforms are produced. According to EST sequences.</text>
</comment>
<comment type="domain">
    <text evidence="1">There are 3 contiguous domains conserved in the CDPK subfamily: a kinase domain, an autoinhibitory (junction) domain and a calmodulin-like domain. The autoinhibitory domain (318-348) inactivates kinase activity under calcium-free conditions (By similarity).</text>
</comment>
<comment type="similarity">
    <text evidence="4">Belongs to the protein kinase superfamily. Ser/Thr protein kinase family. CDPK subfamily.</text>
</comment>
<comment type="sequence caution" evidence="7">
    <conflict type="erroneous termination">
        <sequence resource="EMBL-CDS" id="ABK28533"/>
    </conflict>
    <text>Extended C-terminus.</text>
</comment>
<organism>
    <name type="scientific">Arabidopsis thaliana</name>
    <name type="common">Mouse-ear cress</name>
    <dbReference type="NCBI Taxonomy" id="3702"/>
    <lineage>
        <taxon>Eukaryota</taxon>
        <taxon>Viridiplantae</taxon>
        <taxon>Streptophyta</taxon>
        <taxon>Embryophyta</taxon>
        <taxon>Tracheophyta</taxon>
        <taxon>Spermatophyta</taxon>
        <taxon>Magnoliopsida</taxon>
        <taxon>eudicotyledons</taxon>
        <taxon>Gunneridae</taxon>
        <taxon>Pentapetalae</taxon>
        <taxon>rosids</taxon>
        <taxon>malvids</taxon>
        <taxon>Brassicales</taxon>
        <taxon>Brassicaceae</taxon>
        <taxon>Camelineae</taxon>
        <taxon>Arabidopsis</taxon>
    </lineage>
</organism>
<accession>P93759</accession>
<accession>A0MET2</accession>
<accession>Q3EBI3</accession>
<feature type="initiator methionine" description="Removed" evidence="3">
    <location>
        <position position="1"/>
    </location>
</feature>
<feature type="chain" id="PRO_0000363336" description="Calcium-dependent protein kinase 14">
    <location>
        <begin position="2"/>
        <end position="530"/>
    </location>
</feature>
<feature type="domain" description="Protein kinase" evidence="4">
    <location>
        <begin position="54"/>
        <end position="312"/>
    </location>
</feature>
<feature type="domain" description="EF-hand 1" evidence="5">
    <location>
        <begin position="355"/>
        <end position="390"/>
    </location>
</feature>
<feature type="domain" description="EF-hand 2" evidence="5">
    <location>
        <begin position="391"/>
        <end position="426"/>
    </location>
</feature>
<feature type="domain" description="EF-hand 3" evidence="5">
    <location>
        <begin position="427"/>
        <end position="462"/>
    </location>
</feature>
<feature type="domain" description="EF-hand 4" evidence="5">
    <location>
        <begin position="463"/>
        <end position="498"/>
    </location>
</feature>
<feature type="region of interest" description="Autoinhibitory domain" evidence="1">
    <location>
        <begin position="318"/>
        <end position="348"/>
    </location>
</feature>
<feature type="active site" description="Proton acceptor" evidence="4 6">
    <location>
        <position position="178"/>
    </location>
</feature>
<feature type="binding site" evidence="4">
    <location>
        <begin position="60"/>
        <end position="68"/>
    </location>
    <ligand>
        <name>ATP</name>
        <dbReference type="ChEBI" id="CHEBI:30616"/>
    </ligand>
</feature>
<feature type="binding site" evidence="4">
    <location>
        <position position="83"/>
    </location>
    <ligand>
        <name>ATP</name>
        <dbReference type="ChEBI" id="CHEBI:30616"/>
    </ligand>
</feature>
<feature type="binding site" evidence="7">
    <location>
        <position position="368"/>
    </location>
    <ligand>
        <name>Ca(2+)</name>
        <dbReference type="ChEBI" id="CHEBI:29108"/>
        <label>1</label>
    </ligand>
</feature>
<feature type="binding site" evidence="7">
    <location>
        <position position="370"/>
    </location>
    <ligand>
        <name>Ca(2+)</name>
        <dbReference type="ChEBI" id="CHEBI:29108"/>
        <label>1</label>
    </ligand>
</feature>
<feature type="binding site" evidence="7">
    <location>
        <position position="374"/>
    </location>
    <ligand>
        <name>Ca(2+)</name>
        <dbReference type="ChEBI" id="CHEBI:29108"/>
        <label>1</label>
    </ligand>
</feature>
<feature type="binding site" evidence="7">
    <location>
        <position position="379"/>
    </location>
    <ligand>
        <name>Ca(2+)</name>
        <dbReference type="ChEBI" id="CHEBI:29108"/>
        <label>1</label>
    </ligand>
</feature>
<feature type="binding site" evidence="5">
    <location>
        <position position="404"/>
    </location>
    <ligand>
        <name>Ca(2+)</name>
        <dbReference type="ChEBI" id="CHEBI:29108"/>
        <label>2</label>
    </ligand>
</feature>
<feature type="binding site" evidence="5">
    <location>
        <position position="406"/>
    </location>
    <ligand>
        <name>Ca(2+)</name>
        <dbReference type="ChEBI" id="CHEBI:29108"/>
        <label>2</label>
    </ligand>
</feature>
<feature type="binding site" evidence="5">
    <location>
        <position position="408"/>
    </location>
    <ligand>
        <name>Ca(2+)</name>
        <dbReference type="ChEBI" id="CHEBI:29108"/>
        <label>2</label>
    </ligand>
</feature>
<feature type="binding site" evidence="5">
    <location>
        <position position="410"/>
    </location>
    <ligand>
        <name>Ca(2+)</name>
        <dbReference type="ChEBI" id="CHEBI:29108"/>
        <label>2</label>
    </ligand>
</feature>
<feature type="binding site" evidence="5">
    <location>
        <position position="415"/>
    </location>
    <ligand>
        <name>Ca(2+)</name>
        <dbReference type="ChEBI" id="CHEBI:29108"/>
        <label>2</label>
    </ligand>
</feature>
<feature type="binding site" evidence="5">
    <location>
        <position position="440"/>
    </location>
    <ligand>
        <name>Ca(2+)</name>
        <dbReference type="ChEBI" id="CHEBI:29108"/>
        <label>3</label>
    </ligand>
</feature>
<feature type="binding site" evidence="5">
    <location>
        <position position="442"/>
    </location>
    <ligand>
        <name>Ca(2+)</name>
        <dbReference type="ChEBI" id="CHEBI:29108"/>
        <label>3</label>
    </ligand>
</feature>
<feature type="binding site" evidence="5">
    <location>
        <position position="444"/>
    </location>
    <ligand>
        <name>Ca(2+)</name>
        <dbReference type="ChEBI" id="CHEBI:29108"/>
        <label>3</label>
    </ligand>
</feature>
<feature type="binding site" evidence="5">
    <location>
        <position position="446"/>
    </location>
    <ligand>
        <name>Ca(2+)</name>
        <dbReference type="ChEBI" id="CHEBI:29108"/>
        <label>3</label>
    </ligand>
</feature>
<feature type="binding site" evidence="5">
    <location>
        <position position="451"/>
    </location>
    <ligand>
        <name>Ca(2+)</name>
        <dbReference type="ChEBI" id="CHEBI:29108"/>
        <label>3</label>
    </ligand>
</feature>
<feature type="binding site" evidence="5">
    <location>
        <position position="476"/>
    </location>
    <ligand>
        <name>Ca(2+)</name>
        <dbReference type="ChEBI" id="CHEBI:29108"/>
        <label>4</label>
    </ligand>
</feature>
<feature type="binding site" evidence="5">
    <location>
        <position position="478"/>
    </location>
    <ligand>
        <name>Ca(2+)</name>
        <dbReference type="ChEBI" id="CHEBI:29108"/>
        <label>4</label>
    </ligand>
</feature>
<feature type="binding site" evidence="5">
    <location>
        <position position="480"/>
    </location>
    <ligand>
        <name>Ca(2+)</name>
        <dbReference type="ChEBI" id="CHEBI:29108"/>
        <label>4</label>
    </ligand>
</feature>
<feature type="binding site" evidence="5">
    <location>
        <position position="482"/>
    </location>
    <ligand>
        <name>Ca(2+)</name>
        <dbReference type="ChEBI" id="CHEBI:29108"/>
        <label>4</label>
    </ligand>
</feature>
<feature type="binding site" evidence="5">
    <location>
        <position position="487"/>
    </location>
    <ligand>
        <name>Ca(2+)</name>
        <dbReference type="ChEBI" id="CHEBI:29108"/>
        <label>4</label>
    </ligand>
</feature>
<feature type="modified residue" description="Phosphoserine" evidence="2">
    <location>
        <position position="218"/>
    </location>
</feature>
<feature type="modified residue" description="Phosphoserine" evidence="2">
    <location>
        <position position="484"/>
    </location>
</feature>
<feature type="lipid moiety-binding region" description="N-myristoyl glycine" evidence="3">
    <location>
        <position position="2"/>
    </location>
</feature>
<dbReference type="EC" id="2.7.11.1"/>
<dbReference type="EMBL" id="AC002339">
    <property type="protein sequence ID" value="AAM14824.1"/>
    <property type="molecule type" value="Genomic_DNA"/>
</dbReference>
<dbReference type="EMBL" id="U90439">
    <property type="protein sequence ID" value="AAB63555.1"/>
    <property type="molecule type" value="Genomic_DNA"/>
</dbReference>
<dbReference type="EMBL" id="CP002685">
    <property type="protein sequence ID" value="AEC10041.1"/>
    <property type="molecule type" value="Genomic_DNA"/>
</dbReference>
<dbReference type="EMBL" id="DQ446617">
    <property type="protein sequence ID" value="ABE65901.1"/>
    <property type="molecule type" value="mRNA"/>
</dbReference>
<dbReference type="EMBL" id="DQ653054">
    <property type="protein sequence ID" value="ABK28533.1"/>
    <property type="status" value="ALT_SEQ"/>
    <property type="molecule type" value="mRNA"/>
</dbReference>
<dbReference type="PIR" id="A84847">
    <property type="entry name" value="A84847"/>
</dbReference>
<dbReference type="RefSeq" id="NP_181717.3">
    <molecule id="P93759-1"/>
    <property type="nucleotide sequence ID" value="NM_129750.4"/>
</dbReference>
<dbReference type="SMR" id="P93759"/>
<dbReference type="FunCoup" id="P93759">
    <property type="interactions" value="566"/>
</dbReference>
<dbReference type="STRING" id="3702.P93759"/>
<dbReference type="PaxDb" id="3702-AT2G41860.1"/>
<dbReference type="ProteomicsDB" id="224454">
    <molecule id="P93759-1"/>
</dbReference>
<dbReference type="EnsemblPlants" id="AT2G41860.1">
    <molecule id="P93759-1"/>
    <property type="protein sequence ID" value="AT2G41860.1"/>
    <property type="gene ID" value="AT2G41860"/>
</dbReference>
<dbReference type="GeneID" id="818786"/>
<dbReference type="Gramene" id="AT2G41860.1">
    <molecule id="P93759-1"/>
    <property type="protein sequence ID" value="AT2G41860.1"/>
    <property type="gene ID" value="AT2G41860"/>
</dbReference>
<dbReference type="KEGG" id="ath:AT2G41860"/>
<dbReference type="Araport" id="AT2G41860"/>
<dbReference type="TAIR" id="AT2G41860">
    <property type="gene designation" value="CPK14"/>
</dbReference>
<dbReference type="eggNOG" id="KOG0032">
    <property type="taxonomic scope" value="Eukaryota"/>
</dbReference>
<dbReference type="HOGENOM" id="CLU_000288_37_4_1"/>
<dbReference type="InParanoid" id="P93759"/>
<dbReference type="OrthoDB" id="40902at2759"/>
<dbReference type="PhylomeDB" id="P93759"/>
<dbReference type="PRO" id="PR:P93759"/>
<dbReference type="Proteomes" id="UP000006548">
    <property type="component" value="Chromosome 2"/>
</dbReference>
<dbReference type="ExpressionAtlas" id="P93759">
    <property type="expression patterns" value="baseline and differential"/>
</dbReference>
<dbReference type="GO" id="GO:0005737">
    <property type="term" value="C:cytoplasm"/>
    <property type="evidence" value="ECO:0000314"/>
    <property type="project" value="TAIR"/>
</dbReference>
<dbReference type="GO" id="GO:0016020">
    <property type="term" value="C:membrane"/>
    <property type="evidence" value="ECO:0007669"/>
    <property type="project" value="UniProtKB-SubCell"/>
</dbReference>
<dbReference type="GO" id="GO:0005524">
    <property type="term" value="F:ATP binding"/>
    <property type="evidence" value="ECO:0007669"/>
    <property type="project" value="UniProtKB-KW"/>
</dbReference>
<dbReference type="GO" id="GO:0005509">
    <property type="term" value="F:calcium ion binding"/>
    <property type="evidence" value="ECO:0007669"/>
    <property type="project" value="InterPro"/>
</dbReference>
<dbReference type="GO" id="GO:0106310">
    <property type="term" value="F:protein serine kinase activity"/>
    <property type="evidence" value="ECO:0007669"/>
    <property type="project" value="RHEA"/>
</dbReference>
<dbReference type="GO" id="GO:0004674">
    <property type="term" value="F:protein serine/threonine kinase activity"/>
    <property type="evidence" value="ECO:0007669"/>
    <property type="project" value="UniProtKB-KW"/>
</dbReference>
<dbReference type="CDD" id="cd00051">
    <property type="entry name" value="EFh"/>
    <property type="match status" value="1"/>
</dbReference>
<dbReference type="CDD" id="cd05117">
    <property type="entry name" value="STKc_CAMK"/>
    <property type="match status" value="1"/>
</dbReference>
<dbReference type="FunFam" id="3.30.200.20:FF:000004">
    <property type="entry name" value="Calcium-dependent protein kinase 1"/>
    <property type="match status" value="1"/>
</dbReference>
<dbReference type="FunFam" id="1.10.510.10:FF:000067">
    <property type="entry name" value="calcium-dependent protein kinase 13"/>
    <property type="match status" value="1"/>
</dbReference>
<dbReference type="FunFam" id="1.10.238.10:FF:000050">
    <property type="entry name" value="Calcium-dependent protein kinase 7"/>
    <property type="match status" value="1"/>
</dbReference>
<dbReference type="Gene3D" id="1.10.238.10">
    <property type="entry name" value="EF-hand"/>
    <property type="match status" value="1"/>
</dbReference>
<dbReference type="Gene3D" id="3.30.200.20">
    <property type="entry name" value="Phosphorylase Kinase, domain 1"/>
    <property type="match status" value="1"/>
</dbReference>
<dbReference type="Gene3D" id="1.10.510.10">
    <property type="entry name" value="Transferase(Phosphotransferase) domain 1"/>
    <property type="match status" value="1"/>
</dbReference>
<dbReference type="InterPro" id="IPR050205">
    <property type="entry name" value="CDPK_Ser/Thr_kinases"/>
</dbReference>
<dbReference type="InterPro" id="IPR011992">
    <property type="entry name" value="EF-hand-dom_pair"/>
</dbReference>
<dbReference type="InterPro" id="IPR018247">
    <property type="entry name" value="EF_Hand_1_Ca_BS"/>
</dbReference>
<dbReference type="InterPro" id="IPR002048">
    <property type="entry name" value="EF_hand_dom"/>
</dbReference>
<dbReference type="InterPro" id="IPR011009">
    <property type="entry name" value="Kinase-like_dom_sf"/>
</dbReference>
<dbReference type="InterPro" id="IPR000719">
    <property type="entry name" value="Prot_kinase_dom"/>
</dbReference>
<dbReference type="InterPro" id="IPR017441">
    <property type="entry name" value="Protein_kinase_ATP_BS"/>
</dbReference>
<dbReference type="InterPro" id="IPR008271">
    <property type="entry name" value="Ser/Thr_kinase_AS"/>
</dbReference>
<dbReference type="PANTHER" id="PTHR24349">
    <property type="entry name" value="SERINE/THREONINE-PROTEIN KINASE"/>
    <property type="match status" value="1"/>
</dbReference>
<dbReference type="Pfam" id="PF13499">
    <property type="entry name" value="EF-hand_7"/>
    <property type="match status" value="2"/>
</dbReference>
<dbReference type="Pfam" id="PF00069">
    <property type="entry name" value="Pkinase"/>
    <property type="match status" value="1"/>
</dbReference>
<dbReference type="SMART" id="SM00054">
    <property type="entry name" value="EFh"/>
    <property type="match status" value="4"/>
</dbReference>
<dbReference type="SMART" id="SM00220">
    <property type="entry name" value="S_TKc"/>
    <property type="match status" value="1"/>
</dbReference>
<dbReference type="SUPFAM" id="SSF47473">
    <property type="entry name" value="EF-hand"/>
    <property type="match status" value="1"/>
</dbReference>
<dbReference type="SUPFAM" id="SSF56112">
    <property type="entry name" value="Protein kinase-like (PK-like)"/>
    <property type="match status" value="1"/>
</dbReference>
<dbReference type="PROSITE" id="PS00018">
    <property type="entry name" value="EF_HAND_1"/>
    <property type="match status" value="3"/>
</dbReference>
<dbReference type="PROSITE" id="PS50222">
    <property type="entry name" value="EF_HAND_2"/>
    <property type="match status" value="4"/>
</dbReference>
<dbReference type="PROSITE" id="PS00107">
    <property type="entry name" value="PROTEIN_KINASE_ATP"/>
    <property type="match status" value="1"/>
</dbReference>
<dbReference type="PROSITE" id="PS50011">
    <property type="entry name" value="PROTEIN_KINASE_DOM"/>
    <property type="match status" value="1"/>
</dbReference>
<dbReference type="PROSITE" id="PS00108">
    <property type="entry name" value="PROTEIN_KINASE_ST"/>
    <property type="match status" value="1"/>
</dbReference>
<reference key="1">
    <citation type="journal article" date="1999" name="Nature">
        <title>Sequence and analysis of chromosome 2 of the plant Arabidopsis thaliana.</title>
        <authorList>
            <person name="Lin X."/>
            <person name="Kaul S."/>
            <person name="Rounsley S.D."/>
            <person name="Shea T.P."/>
            <person name="Benito M.-I."/>
            <person name="Town C.D."/>
            <person name="Fujii C.Y."/>
            <person name="Mason T.M."/>
            <person name="Bowman C.L."/>
            <person name="Barnstead M.E."/>
            <person name="Feldblyum T.V."/>
            <person name="Buell C.R."/>
            <person name="Ketchum K.A."/>
            <person name="Lee J.J."/>
            <person name="Ronning C.M."/>
            <person name="Koo H.L."/>
            <person name="Moffat K.S."/>
            <person name="Cronin L.A."/>
            <person name="Shen M."/>
            <person name="Pai G."/>
            <person name="Van Aken S."/>
            <person name="Umayam L."/>
            <person name="Tallon L.J."/>
            <person name="Gill J.E."/>
            <person name="Adams M.D."/>
            <person name="Carrera A.J."/>
            <person name="Creasy T.H."/>
            <person name="Goodman H.M."/>
            <person name="Somerville C.R."/>
            <person name="Copenhaver G.P."/>
            <person name="Preuss D."/>
            <person name="Nierman W.C."/>
            <person name="White O."/>
            <person name="Eisen J.A."/>
            <person name="Salzberg S.L."/>
            <person name="Fraser C.M."/>
            <person name="Venter J.C."/>
        </authorList>
    </citation>
    <scope>NUCLEOTIDE SEQUENCE [LARGE SCALE GENOMIC DNA]</scope>
    <source>
        <strain>cv. Columbia</strain>
    </source>
</reference>
<reference key="2">
    <citation type="journal article" date="2017" name="Plant J.">
        <title>Araport11: a complete reannotation of the Arabidopsis thaliana reference genome.</title>
        <authorList>
            <person name="Cheng C.Y."/>
            <person name="Krishnakumar V."/>
            <person name="Chan A.P."/>
            <person name="Thibaud-Nissen F."/>
            <person name="Schobel S."/>
            <person name="Town C.D."/>
        </authorList>
    </citation>
    <scope>GENOME REANNOTATION</scope>
    <source>
        <strain>cv. Columbia</strain>
    </source>
</reference>
<reference key="3">
    <citation type="journal article" date="2006" name="Plant Biotechnol. J.">
        <title>Simultaneous high-throughput recombinational cloning of open reading frames in closed and open configurations.</title>
        <authorList>
            <person name="Underwood B.A."/>
            <person name="Vanderhaeghen R."/>
            <person name="Whitford R."/>
            <person name="Town C.D."/>
            <person name="Hilson P."/>
        </authorList>
    </citation>
    <scope>NUCLEOTIDE SEQUENCE [LARGE SCALE MRNA]</scope>
    <source>
        <strain>cv. Columbia</strain>
    </source>
</reference>
<reference key="4">
    <citation type="journal article" date="2001" name="New Phytol.">
        <title>The CDPK superfamily of protein kinases.</title>
        <authorList>
            <person name="Harmon A.C."/>
            <person name="Gribskov M."/>
            <person name="Gubrium E."/>
            <person name="Harper J.F."/>
        </authorList>
    </citation>
    <scope>GENE FAMILY</scope>
    <scope>NOMENCLATURE</scope>
</reference>
<reference key="5">
    <citation type="journal article" date="2002" name="Plant Physiol.">
        <title>Calcium signaling through protein kinases. The Arabidopsis calcium-dependent protein kinase gene family.</title>
        <authorList>
            <person name="Cheng S.-H."/>
            <person name="Willmann M.R."/>
            <person name="Chen H.-C."/>
            <person name="Sheen J."/>
        </authorList>
    </citation>
    <scope>GENE FAMILY</scope>
    <scope>NOMENCLATURE</scope>
</reference>
<reference key="6">
    <citation type="journal article" date="2003" name="Plant Physiol.">
        <title>The Arabidopsis CDPK-SnRK superfamily of protein kinases.</title>
        <authorList>
            <person name="Hrabak E.M."/>
            <person name="Chan C.W.M."/>
            <person name="Gribskov M."/>
            <person name="Harper J.F."/>
            <person name="Choi J.H."/>
            <person name="Halford N."/>
            <person name="Kudla J."/>
            <person name="Luan S."/>
            <person name="Nimmo H.G."/>
            <person name="Sussman M.R."/>
            <person name="Thomas M."/>
            <person name="Walker-Simmons K."/>
            <person name="Zhu J.-K."/>
            <person name="Harmon A.C."/>
        </authorList>
    </citation>
    <scope>GENE FAMILY</scope>
    <scope>NOMENCLATURE</scope>
</reference>
<sequence length="530" mass="60054">MGNCCGTAGSLIQDKQKKGFKLPNPFSNEYGNHHDGLKLIVLKEPTGHEIKQKYKLGRELGRGEFGVTYLCTEIETGEIFACKSILKKKLKTSIDIEDVKREVEIMRQMPEHPNIVTLKETYEDDKAVHLVMELCEGGELFDRIVARGHYTERAAASVIKTIIEVVQMCHKHGVMHRDLKPENFLFANKKETASLKAIDFGLSVFFKPGERFNEIVGSPYYMAPEVLRRSYGQEIDIWSAGVILYILLCGVPPFWAETEHGVAKAILKSVIDFKRDPWPKVSDNAKDLIKKMLHPDPRRRLTAQQVLDHPWIQNGKNASNVSLGETVRARLKQFSVMNKLKKRALRVIAEHLSVEETSCIKERFQVMDTSNRGKITITELGIGLQKLGIVVPQDDIQILMDAGDVDKDGYLDVNEFVAISVHIRKLGNDEHLKKAFTFFDKNKSGYIEIEELRDALADDVDTTSEEVVEAIILDVDTNKDGKISYDEFATMMKTGTDWRKASRQYSRDLFKCLSLKLMQDGSLQSNGDTK</sequence>
<gene>
    <name type="primary">CPK14</name>
    <name type="ordered locus">At2g41860</name>
    <name type="ORF">T11A7.4</name>
    <name type="ORF">T6D20.24</name>
</gene>
<proteinExistence type="evidence at transcript level"/>
<evidence type="ECO:0000250" key="1"/>
<evidence type="ECO:0000250" key="2">
    <source>
        <dbReference type="UniProtKB" id="Q9FKW4"/>
    </source>
</evidence>
<evidence type="ECO:0000255" key="3"/>
<evidence type="ECO:0000255" key="4">
    <source>
        <dbReference type="PROSITE-ProRule" id="PRU00159"/>
    </source>
</evidence>
<evidence type="ECO:0000255" key="5">
    <source>
        <dbReference type="PROSITE-ProRule" id="PRU00448"/>
    </source>
</evidence>
<evidence type="ECO:0000255" key="6">
    <source>
        <dbReference type="PROSITE-ProRule" id="PRU10027"/>
    </source>
</evidence>
<evidence type="ECO:0000305" key="7"/>
<protein>
    <recommendedName>
        <fullName>Calcium-dependent protein kinase 14</fullName>
        <ecNumber>2.7.11.1</ecNumber>
    </recommendedName>
</protein>